<evidence type="ECO:0000255" key="1"/>
<evidence type="ECO:0000256" key="2">
    <source>
        <dbReference type="SAM" id="MobiDB-lite"/>
    </source>
</evidence>
<evidence type="ECO:0000269" key="3">
    <source>
    </source>
</evidence>
<evidence type="ECO:0000305" key="4"/>
<evidence type="ECO:0007744" key="5">
    <source>
    </source>
</evidence>
<name>NAT12_ARATH</name>
<protein>
    <recommendedName>
        <fullName>Nucleobase-ascorbate transporter 12</fullName>
        <shortName>AtNAT12</shortName>
    </recommendedName>
</protein>
<reference key="1">
    <citation type="journal article" date="2006" name="Plant Cell Physiol.">
        <title>Identification and expression analysis of twelve members of the nucleobase-ascorbate transporter (NAT) gene family in Arabidopsis thaliana.</title>
        <authorList>
            <person name="Maurino V.G."/>
            <person name="Grube E."/>
            <person name="Zielinski J."/>
            <person name="Schild A."/>
            <person name="Fischer K."/>
            <person name="Flugge U.-I."/>
        </authorList>
    </citation>
    <scope>NUCLEOTIDE SEQUENCE [MRNA] (ISOFORM 1)</scope>
    <scope>GENE FAMILY</scope>
    <scope>SUBCELLULAR LOCATION</scope>
    <scope>TISSUE SPECIFICITY</scope>
    <source>
        <strain>cv. Columbia</strain>
    </source>
</reference>
<reference key="2">
    <citation type="journal article" date="1999" name="Nature">
        <title>Sequence and analysis of chromosome 2 of the plant Arabidopsis thaliana.</title>
        <authorList>
            <person name="Lin X."/>
            <person name="Kaul S."/>
            <person name="Rounsley S.D."/>
            <person name="Shea T.P."/>
            <person name="Benito M.-I."/>
            <person name="Town C.D."/>
            <person name="Fujii C.Y."/>
            <person name="Mason T.M."/>
            <person name="Bowman C.L."/>
            <person name="Barnstead M.E."/>
            <person name="Feldblyum T.V."/>
            <person name="Buell C.R."/>
            <person name="Ketchum K.A."/>
            <person name="Lee J.J."/>
            <person name="Ronning C.M."/>
            <person name="Koo H.L."/>
            <person name="Moffat K.S."/>
            <person name="Cronin L.A."/>
            <person name="Shen M."/>
            <person name="Pai G."/>
            <person name="Van Aken S."/>
            <person name="Umayam L."/>
            <person name="Tallon L.J."/>
            <person name="Gill J.E."/>
            <person name="Adams M.D."/>
            <person name="Carrera A.J."/>
            <person name="Creasy T.H."/>
            <person name="Goodman H.M."/>
            <person name="Somerville C.R."/>
            <person name="Copenhaver G.P."/>
            <person name="Preuss D."/>
            <person name="Nierman W.C."/>
            <person name="White O."/>
            <person name="Eisen J.A."/>
            <person name="Salzberg S.L."/>
            <person name="Fraser C.M."/>
            <person name="Venter J.C."/>
        </authorList>
    </citation>
    <scope>NUCLEOTIDE SEQUENCE [LARGE SCALE GENOMIC DNA]</scope>
    <source>
        <strain>cv. Columbia</strain>
    </source>
</reference>
<reference key="3">
    <citation type="journal article" date="2017" name="Plant J.">
        <title>Araport11: a complete reannotation of the Arabidopsis thaliana reference genome.</title>
        <authorList>
            <person name="Cheng C.Y."/>
            <person name="Krishnakumar V."/>
            <person name="Chan A.P."/>
            <person name="Thibaud-Nissen F."/>
            <person name="Schobel S."/>
            <person name="Town C.D."/>
        </authorList>
    </citation>
    <scope>GENOME REANNOTATION</scope>
    <source>
        <strain>cv. Columbia</strain>
    </source>
</reference>
<reference key="4">
    <citation type="journal article" date="2003" name="Science">
        <title>Empirical analysis of transcriptional activity in the Arabidopsis genome.</title>
        <authorList>
            <person name="Yamada K."/>
            <person name="Lim J."/>
            <person name="Dale J.M."/>
            <person name="Chen H."/>
            <person name="Shinn P."/>
            <person name="Palm C.J."/>
            <person name="Southwick A.M."/>
            <person name="Wu H.C."/>
            <person name="Kim C.J."/>
            <person name="Nguyen M."/>
            <person name="Pham P.K."/>
            <person name="Cheuk R.F."/>
            <person name="Karlin-Newmann G."/>
            <person name="Liu S.X."/>
            <person name="Lam B."/>
            <person name="Sakano H."/>
            <person name="Wu T."/>
            <person name="Yu G."/>
            <person name="Miranda M."/>
            <person name="Quach H.L."/>
            <person name="Tripp M."/>
            <person name="Chang C.H."/>
            <person name="Lee J.M."/>
            <person name="Toriumi M.J."/>
            <person name="Chan M.M."/>
            <person name="Tang C.C."/>
            <person name="Onodera C.S."/>
            <person name="Deng J.M."/>
            <person name="Akiyama K."/>
            <person name="Ansari Y."/>
            <person name="Arakawa T."/>
            <person name="Banh J."/>
            <person name="Banno F."/>
            <person name="Bowser L."/>
            <person name="Brooks S.Y."/>
            <person name="Carninci P."/>
            <person name="Chao Q."/>
            <person name="Choy N."/>
            <person name="Enju A."/>
            <person name="Goldsmith A.D."/>
            <person name="Gurjal M."/>
            <person name="Hansen N.F."/>
            <person name="Hayashizaki Y."/>
            <person name="Johnson-Hopson C."/>
            <person name="Hsuan V.W."/>
            <person name="Iida K."/>
            <person name="Karnes M."/>
            <person name="Khan S."/>
            <person name="Koesema E."/>
            <person name="Ishida J."/>
            <person name="Jiang P.X."/>
            <person name="Jones T."/>
            <person name="Kawai J."/>
            <person name="Kamiya A."/>
            <person name="Meyers C."/>
            <person name="Nakajima M."/>
            <person name="Narusaka M."/>
            <person name="Seki M."/>
            <person name="Sakurai T."/>
            <person name="Satou M."/>
            <person name="Tamse R."/>
            <person name="Vaysberg M."/>
            <person name="Wallender E.K."/>
            <person name="Wong C."/>
            <person name="Yamamura Y."/>
            <person name="Yuan S."/>
            <person name="Shinozaki K."/>
            <person name="Davis R.W."/>
            <person name="Theologis A."/>
            <person name="Ecker J.R."/>
        </authorList>
    </citation>
    <scope>NUCLEOTIDE SEQUENCE [LARGE SCALE MRNA] (ISOFORM 1)</scope>
    <source>
        <strain>cv. Columbia</strain>
    </source>
</reference>
<reference key="5">
    <citation type="journal article" date="2003" name="Mol. Cell. Proteomics">
        <title>Large-scale analysis of in vivo phosphorylated membrane proteins by immobilized metal ion affinity chromatography and mass spectrometry.</title>
        <authorList>
            <person name="Nuehse T.S."/>
            <person name="Stensballe A."/>
            <person name="Jensen O.N."/>
            <person name="Peck S.C."/>
        </authorList>
    </citation>
    <scope>PHOSPHORYLATION [LARGE SCALE ANALYSIS] AT SER-40</scope>
    <scope>IDENTIFICATION BY MASS SPECTROMETRY [LARGE SCALE ANALYSIS]</scope>
    <source>
        <strain>cv. La-0</strain>
    </source>
</reference>
<reference key="6">
    <citation type="journal article" date="2004" name="Plant Cell">
        <title>Phosphoproteomics of the Arabidopsis plasma membrane and a new phosphorylation site database.</title>
        <authorList>
            <person name="Nuehse T.S."/>
            <person name="Stensballe A."/>
            <person name="Jensen O.N."/>
            <person name="Peck S.C."/>
        </authorList>
    </citation>
    <scope>IDENTIFICATION BY MASS SPECTROMETRY [LARGE SCALE ANALYSIS]</scope>
</reference>
<reference key="7">
    <citation type="journal article" date="2009" name="Plant Physiol.">
        <title>Large-scale Arabidopsis phosphoproteome profiling reveals novel chloroplast kinase substrates and phosphorylation networks.</title>
        <authorList>
            <person name="Reiland S."/>
            <person name="Messerli G."/>
            <person name="Baerenfaller K."/>
            <person name="Gerrits B."/>
            <person name="Endler A."/>
            <person name="Grossmann J."/>
            <person name="Gruissem W."/>
            <person name="Baginsky S."/>
        </authorList>
    </citation>
    <scope>IDENTIFICATION BY MASS SPECTROMETRY [LARGE SCALE ANALYSIS]</scope>
</reference>
<gene>
    <name type="primary">NAT12</name>
    <name type="ordered locus">At2g27810</name>
    <name type="ORF">F15K20.9</name>
</gene>
<comment type="subcellular location">
    <subcellularLocation>
        <location evidence="3">Cell membrane</location>
        <topology evidence="3">Multi-pass membrane protein</topology>
    </subcellularLocation>
</comment>
<comment type="alternative products">
    <event type="alternative splicing"/>
    <isoform>
        <id>Q3E7D0-1</id>
        <name>1</name>
        <sequence type="displayed"/>
    </isoform>
    <isoform>
        <id>Q3E7D0-2</id>
        <name>2</name>
        <sequence type="described" ref="VSP_022177"/>
    </isoform>
</comment>
<comment type="tissue specificity">
    <text evidence="3">Ubiquitous.</text>
</comment>
<comment type="similarity">
    <text evidence="4">Belongs to the nucleobase:cation symporter-2 (NCS2) (TC 2.A.40) family.</text>
</comment>
<comment type="sequence caution" evidence="4">
    <conflict type="erroneous gene model prediction">
        <sequence resource="EMBL-CDS" id="AAC73019"/>
    </conflict>
</comment>
<accession>Q3E7D0</accession>
<accession>Q8LPL9</accession>
<accession>Q9ZUY2</accession>
<dbReference type="EMBL" id="AY444865">
    <property type="protein sequence ID" value="AAR18374.1"/>
    <property type="molecule type" value="mRNA"/>
</dbReference>
<dbReference type="EMBL" id="AC005824">
    <property type="protein sequence ID" value="AAC73019.1"/>
    <property type="status" value="ALT_SEQ"/>
    <property type="molecule type" value="Genomic_DNA"/>
</dbReference>
<dbReference type="EMBL" id="CP002685">
    <property type="protein sequence ID" value="AEC08047.1"/>
    <property type="molecule type" value="Genomic_DNA"/>
</dbReference>
<dbReference type="EMBL" id="CP002685">
    <property type="protein sequence ID" value="AEC08048.1"/>
    <property type="molecule type" value="Genomic_DNA"/>
</dbReference>
<dbReference type="EMBL" id="AY099545">
    <property type="protein sequence ID" value="AAM20397.1"/>
    <property type="molecule type" value="mRNA"/>
</dbReference>
<dbReference type="EMBL" id="BT002121">
    <property type="protein sequence ID" value="AAN72132.1"/>
    <property type="molecule type" value="mRNA"/>
</dbReference>
<dbReference type="PIR" id="C84677">
    <property type="entry name" value="C84677"/>
</dbReference>
<dbReference type="RefSeq" id="NP_850108.1">
    <molecule id="Q3E7D0-1"/>
    <property type="nucleotide sequence ID" value="NM_179777.2"/>
</dbReference>
<dbReference type="RefSeq" id="NP_973550.2">
    <molecule id="Q3E7D0-2"/>
    <property type="nucleotide sequence ID" value="NM_201821.2"/>
</dbReference>
<dbReference type="SMR" id="Q3E7D0"/>
<dbReference type="FunCoup" id="Q3E7D0">
    <property type="interactions" value="753"/>
</dbReference>
<dbReference type="STRING" id="3702.Q3E7D0"/>
<dbReference type="TCDB" id="2.A.40.6.6">
    <property type="family name" value="the nucleobase/ascorbate transporter (nat) or nucleobase:cation symporter-2 (ncs2) family"/>
</dbReference>
<dbReference type="GlyGen" id="Q3E7D0">
    <property type="glycosylation" value="2 sites"/>
</dbReference>
<dbReference type="iPTMnet" id="Q3E7D0"/>
<dbReference type="PaxDb" id="3702-AT2G27810.1"/>
<dbReference type="ProteomicsDB" id="251247">
    <molecule id="Q3E7D0-1"/>
</dbReference>
<dbReference type="EnsemblPlants" id="AT2G27810.1">
    <molecule id="Q3E7D0-1"/>
    <property type="protein sequence ID" value="AT2G27810.1"/>
    <property type="gene ID" value="AT2G27810"/>
</dbReference>
<dbReference type="EnsemblPlants" id="AT2G27810.2">
    <molecule id="Q3E7D0-2"/>
    <property type="protein sequence ID" value="AT2G27810.2"/>
    <property type="gene ID" value="AT2G27810"/>
</dbReference>
<dbReference type="GeneID" id="817328"/>
<dbReference type="Gramene" id="AT2G27810.1">
    <molecule id="Q3E7D0-1"/>
    <property type="protein sequence ID" value="AT2G27810.1"/>
    <property type="gene ID" value="AT2G27810"/>
</dbReference>
<dbReference type="Gramene" id="AT2G27810.2">
    <molecule id="Q3E7D0-2"/>
    <property type="protein sequence ID" value="AT2G27810.2"/>
    <property type="gene ID" value="AT2G27810"/>
</dbReference>
<dbReference type="KEGG" id="ath:AT2G27810"/>
<dbReference type="Araport" id="AT2G27810"/>
<dbReference type="TAIR" id="AT2G27810">
    <property type="gene designation" value="NAT12"/>
</dbReference>
<dbReference type="eggNOG" id="KOG1292">
    <property type="taxonomic scope" value="Eukaryota"/>
</dbReference>
<dbReference type="InParanoid" id="Q3E7D0"/>
<dbReference type="OMA" id="HRFKHIM"/>
<dbReference type="PhylomeDB" id="Q3E7D0"/>
<dbReference type="PRO" id="PR:Q3E7D0"/>
<dbReference type="Proteomes" id="UP000006548">
    <property type="component" value="Chromosome 2"/>
</dbReference>
<dbReference type="ExpressionAtlas" id="Q3E7D0">
    <property type="expression patterns" value="baseline and differential"/>
</dbReference>
<dbReference type="GO" id="GO:0005886">
    <property type="term" value="C:plasma membrane"/>
    <property type="evidence" value="ECO:0000314"/>
    <property type="project" value="TAIR"/>
</dbReference>
<dbReference type="GO" id="GO:0015207">
    <property type="term" value="F:adenine transmembrane transporter activity"/>
    <property type="evidence" value="ECO:0000314"/>
    <property type="project" value="TAIR"/>
</dbReference>
<dbReference type="GO" id="GO:0015208">
    <property type="term" value="F:guanine transmembrane transporter activity"/>
    <property type="evidence" value="ECO:0000314"/>
    <property type="project" value="TAIR"/>
</dbReference>
<dbReference type="GO" id="GO:0015294">
    <property type="term" value="F:solute:monoatomic cation symporter activity"/>
    <property type="evidence" value="ECO:0000314"/>
    <property type="project" value="TAIR"/>
</dbReference>
<dbReference type="GO" id="GO:0015210">
    <property type="term" value="F:uracil transmembrane transporter activity"/>
    <property type="evidence" value="ECO:0000314"/>
    <property type="project" value="TAIR"/>
</dbReference>
<dbReference type="GO" id="GO:0098702">
    <property type="term" value="P:adenine import across plasma membrane"/>
    <property type="evidence" value="ECO:0000314"/>
    <property type="project" value="TAIR"/>
</dbReference>
<dbReference type="GO" id="GO:0098710">
    <property type="term" value="P:guanine import across plasma membrane"/>
    <property type="evidence" value="ECO:0000314"/>
    <property type="project" value="TAIR"/>
</dbReference>
<dbReference type="GO" id="GO:0035344">
    <property type="term" value="P:hypoxanthine transport"/>
    <property type="evidence" value="ECO:0000314"/>
    <property type="project" value="TAIR"/>
</dbReference>
<dbReference type="GO" id="GO:0098721">
    <property type="term" value="P:uracil import across plasma membrane"/>
    <property type="evidence" value="ECO:0000314"/>
    <property type="project" value="TAIR"/>
</dbReference>
<dbReference type="InterPro" id="IPR006043">
    <property type="entry name" value="NCS2"/>
</dbReference>
<dbReference type="PANTHER" id="PTHR11119">
    <property type="entry name" value="XANTHINE-URACIL / VITAMIN C PERMEASE FAMILY MEMBER"/>
    <property type="match status" value="1"/>
</dbReference>
<dbReference type="Pfam" id="PF00860">
    <property type="entry name" value="Xan_ur_permease"/>
    <property type="match status" value="1"/>
</dbReference>
<sequence>MSSSDPKPGPKPGPWPPTPESAAMPPSSWAKKTGFRPKFSGETTATDSSSGQLSLPVRAKQQETQPDLEAGQTRLRPPPPVSAAVTNGETDKDKKEKPPPPPPGSVAVPVKDQPVKRRRDSDGVVGRSNGPDGANGSGDPVRRPGRIEETVEVLPQSMDDDLVARNLHMKYGLRDTPGLVPIGFYGLQHYLSMLGSLILVPLVIVPAMGGSHEEVANVVSTVLFVSGITTLLHTSFGSRLPLIQGPSFVFLAPALAIINSPEFQGLNGNNNFKHIMRELQGAIIIGSAFQAVLGYSGLMSLILRLVNPVVVAPTVAAVGLSFYSYGFPLVGKCLEIGVVQILLVIIFALYLRKISVLSHRIFLIYAVPLSLAITWAAAFLLTETGAYTYKGCDPNVPVSNVVSTHCRKYMTRMKYCRVDTSHALSSAPWFRFPYPLQWGVPLFNWKMAFVMCVVSVIASVDSVGSYHASSLLVASRPPTRGVVSRAIGLEGFTSVLAGLWGTGTGSTTLTENVHTIAVTKMGSRRVVELGACVLVIFSLVGKVGGFLASIPQVMVASLLCFMWAMFTALGLSNLRYSEAGSSRNIIIVGLSLFFSLSVPAYFQQYGISPNSNLSVPSYYQPYIVSSHGPFKSQYKGMNYVMNTLLSMSMVIAFIMAVILDNTVPGSKQERGVYVWSDSETATREPALAKDYELPFRVGRFFRWVKWVGI</sequence>
<keyword id="KW-0025">Alternative splicing</keyword>
<keyword id="KW-1003">Cell membrane</keyword>
<keyword id="KW-0472">Membrane</keyword>
<keyword id="KW-0597">Phosphoprotein</keyword>
<keyword id="KW-1185">Reference proteome</keyword>
<keyword id="KW-0812">Transmembrane</keyword>
<keyword id="KW-1133">Transmembrane helix</keyword>
<keyword id="KW-0813">Transport</keyword>
<feature type="chain" id="PRO_0000270169" description="Nucleobase-ascorbate transporter 12">
    <location>
        <begin position="1"/>
        <end position="709"/>
    </location>
</feature>
<feature type="transmembrane region" description="Helical" evidence="1">
    <location>
        <begin position="190"/>
        <end position="210"/>
    </location>
</feature>
<feature type="transmembrane region" description="Helical" evidence="1">
    <location>
        <begin position="218"/>
        <end position="238"/>
    </location>
</feature>
<feature type="transmembrane region" description="Helical" evidence="1">
    <location>
        <begin position="240"/>
        <end position="260"/>
    </location>
</feature>
<feature type="transmembrane region" description="Helical" evidence="1">
    <location>
        <begin position="283"/>
        <end position="303"/>
    </location>
</feature>
<feature type="transmembrane region" description="Helical" evidence="1">
    <location>
        <begin position="308"/>
        <end position="328"/>
    </location>
</feature>
<feature type="transmembrane region" description="Helical" evidence="1">
    <location>
        <begin position="329"/>
        <end position="349"/>
    </location>
</feature>
<feature type="transmembrane region" description="Helical" evidence="1">
    <location>
        <begin position="361"/>
        <end position="381"/>
    </location>
</feature>
<feature type="transmembrane region" description="Helical" evidence="1">
    <location>
        <begin position="438"/>
        <end position="458"/>
    </location>
</feature>
<feature type="transmembrane region" description="Helical" evidence="1">
    <location>
        <begin position="530"/>
        <end position="550"/>
    </location>
</feature>
<feature type="transmembrane region" description="Helical" evidence="1">
    <location>
        <begin position="551"/>
        <end position="571"/>
    </location>
</feature>
<feature type="transmembrane region" description="Helical" evidence="1">
    <location>
        <begin position="585"/>
        <end position="605"/>
    </location>
</feature>
<feature type="transmembrane region" description="Helical" evidence="1">
    <location>
        <begin position="639"/>
        <end position="659"/>
    </location>
</feature>
<feature type="region of interest" description="Disordered" evidence="2">
    <location>
        <begin position="1"/>
        <end position="145"/>
    </location>
</feature>
<feature type="compositionally biased region" description="Pro residues" evidence="2">
    <location>
        <begin position="7"/>
        <end position="19"/>
    </location>
</feature>
<feature type="compositionally biased region" description="Polar residues" evidence="2">
    <location>
        <begin position="41"/>
        <end position="53"/>
    </location>
</feature>
<feature type="compositionally biased region" description="Basic and acidic residues" evidence="2">
    <location>
        <begin position="89"/>
        <end position="98"/>
    </location>
</feature>
<feature type="compositionally biased region" description="Basic and acidic residues" evidence="2">
    <location>
        <begin position="113"/>
        <end position="122"/>
    </location>
</feature>
<feature type="modified residue" description="Phosphoserine" evidence="5">
    <location>
        <position position="40"/>
    </location>
</feature>
<feature type="splice variant" id="VSP_022177" description="In isoform 2." evidence="4">
    <location>
        <begin position="590"/>
        <end position="709"/>
    </location>
</feature>
<organism>
    <name type="scientific">Arabidopsis thaliana</name>
    <name type="common">Mouse-ear cress</name>
    <dbReference type="NCBI Taxonomy" id="3702"/>
    <lineage>
        <taxon>Eukaryota</taxon>
        <taxon>Viridiplantae</taxon>
        <taxon>Streptophyta</taxon>
        <taxon>Embryophyta</taxon>
        <taxon>Tracheophyta</taxon>
        <taxon>Spermatophyta</taxon>
        <taxon>Magnoliopsida</taxon>
        <taxon>eudicotyledons</taxon>
        <taxon>Gunneridae</taxon>
        <taxon>Pentapetalae</taxon>
        <taxon>rosids</taxon>
        <taxon>malvids</taxon>
        <taxon>Brassicales</taxon>
        <taxon>Brassicaceae</taxon>
        <taxon>Camelineae</taxon>
        <taxon>Arabidopsis</taxon>
    </lineage>
</organism>
<proteinExistence type="evidence at protein level"/>